<organism>
    <name type="scientific">Methanothermobacter thermautotrophicus (strain ATCC 29096 / DSM 1053 / JCM 10044 / NBRC 100330 / Delta H)</name>
    <name type="common">Methanobacterium thermoautotrophicum</name>
    <dbReference type="NCBI Taxonomy" id="187420"/>
    <lineage>
        <taxon>Archaea</taxon>
        <taxon>Methanobacteriati</taxon>
        <taxon>Methanobacteriota</taxon>
        <taxon>Methanomada group</taxon>
        <taxon>Methanobacteria</taxon>
        <taxon>Methanobacteriales</taxon>
        <taxon>Methanobacteriaceae</taxon>
        <taxon>Methanothermobacter</taxon>
    </lineage>
</organism>
<dbReference type="EC" id="2.7.1.237" evidence="1"/>
<dbReference type="EMBL" id="AE000666">
    <property type="protein sequence ID" value="AAB84772.1"/>
    <property type="molecule type" value="Genomic_DNA"/>
</dbReference>
<dbReference type="PIR" id="E69133">
    <property type="entry name" value="E69133"/>
</dbReference>
<dbReference type="RefSeq" id="WP_010875905.1">
    <property type="nucleotide sequence ID" value="NC_000916.1"/>
</dbReference>
<dbReference type="SMR" id="O26366"/>
<dbReference type="FunCoup" id="O26366">
    <property type="interactions" value="5"/>
</dbReference>
<dbReference type="STRING" id="187420.MTH_266"/>
<dbReference type="PaxDb" id="187420-MTH_266"/>
<dbReference type="EnsemblBacteria" id="AAB84772">
    <property type="protein sequence ID" value="AAB84772"/>
    <property type="gene ID" value="MTH_266"/>
</dbReference>
<dbReference type="KEGG" id="mth:MTH_266"/>
<dbReference type="PATRIC" id="fig|187420.15.peg.235"/>
<dbReference type="HOGENOM" id="CLU_120795_1_0_2"/>
<dbReference type="InParanoid" id="O26366"/>
<dbReference type="UniPathway" id="UPA00241"/>
<dbReference type="Proteomes" id="UP000005223">
    <property type="component" value="Chromosome"/>
</dbReference>
<dbReference type="GO" id="GO:0005525">
    <property type="term" value="F:GTP binding"/>
    <property type="evidence" value="ECO:0007669"/>
    <property type="project" value="UniProtKB-UniRule"/>
</dbReference>
<dbReference type="GO" id="GO:0016301">
    <property type="term" value="F:kinase activity"/>
    <property type="evidence" value="ECO:0007669"/>
    <property type="project" value="UniProtKB-UniRule"/>
</dbReference>
<dbReference type="GO" id="GO:0015937">
    <property type="term" value="P:coenzyme A biosynthetic process"/>
    <property type="evidence" value="ECO:0007669"/>
    <property type="project" value="UniProtKB-UniRule"/>
</dbReference>
<dbReference type="HAMAP" id="MF_00590">
    <property type="entry name" value="Dephospho_CoA_kinase_GTP_dep"/>
    <property type="match status" value="1"/>
</dbReference>
<dbReference type="InterPro" id="IPR007164">
    <property type="entry name" value="GTP-dep_dephospho-CoA_kin"/>
</dbReference>
<dbReference type="PANTHER" id="PTHR40732:SF1">
    <property type="entry name" value="GTP-DEPENDENT DEPHOSPHO-COA KINASE"/>
    <property type="match status" value="1"/>
</dbReference>
<dbReference type="PANTHER" id="PTHR40732">
    <property type="entry name" value="UPF0218 PROTEIN TK1697"/>
    <property type="match status" value="1"/>
</dbReference>
<dbReference type="Pfam" id="PF04019">
    <property type="entry name" value="DUF359"/>
    <property type="match status" value="1"/>
</dbReference>
<dbReference type="PIRSF" id="PIRSF006533">
    <property type="entry name" value="UCP006533"/>
    <property type="match status" value="1"/>
</dbReference>
<comment type="function">
    <text evidence="1">Catalyzes the GTP-dependent phosphorylation of the 3'-hydroxyl group of dephosphocoenzyme A to form coenzyme A (CoA).</text>
</comment>
<comment type="catalytic activity">
    <reaction evidence="1">
        <text>3'-dephospho-CoA + GTP = GDP + CoA + H(+)</text>
        <dbReference type="Rhea" id="RHEA:61156"/>
        <dbReference type="ChEBI" id="CHEBI:15378"/>
        <dbReference type="ChEBI" id="CHEBI:37565"/>
        <dbReference type="ChEBI" id="CHEBI:57287"/>
        <dbReference type="ChEBI" id="CHEBI:57328"/>
        <dbReference type="ChEBI" id="CHEBI:58189"/>
        <dbReference type="EC" id="2.7.1.237"/>
    </reaction>
</comment>
<comment type="pathway">
    <text evidence="1">Cofactor biosynthesis; coenzyme A biosynthesis.</text>
</comment>
<comment type="similarity">
    <text evidence="1">Belongs to the GTP-dependent DPCK family.</text>
</comment>
<evidence type="ECO:0000255" key="1">
    <source>
        <dbReference type="HAMAP-Rule" id="MF_00590"/>
    </source>
</evidence>
<proteinExistence type="inferred from homology"/>
<accession>O26366</accession>
<gene>
    <name type="ordered locus">MTH_266</name>
</gene>
<sequence>MYILPEELRAELKRPLGELHRSFSDVDVGNSFLITVGDVTTRNALEHGLKPDVSIIDNRIQRRDSDHEFRDTATILRSRNPPGTVTESLWKSIEEAIEGATERGERFMIVVDGEEDLAVLPSILLAPPDTVILYGQPDEGVVLVRASETSSKAEELMKKFEEA</sequence>
<keyword id="KW-0173">Coenzyme A biosynthesis</keyword>
<keyword id="KW-0342">GTP-binding</keyword>
<keyword id="KW-0418">Kinase</keyword>
<keyword id="KW-0547">Nucleotide-binding</keyword>
<keyword id="KW-1185">Reference proteome</keyword>
<keyword id="KW-0808">Transferase</keyword>
<protein>
    <recommendedName>
        <fullName evidence="1">GTP-dependent dephospho-CoA kinase</fullName>
        <ecNumber evidence="1">2.7.1.237</ecNumber>
    </recommendedName>
    <alternativeName>
        <fullName evidence="1">Dephospho-coenzyme A kinase</fullName>
        <shortName evidence="1">DPCK</shortName>
    </alternativeName>
</protein>
<feature type="chain" id="PRO_0000137611" description="GTP-dependent dephospho-CoA kinase">
    <location>
        <begin position="1"/>
        <end position="163"/>
    </location>
</feature>
<feature type="binding site" evidence="1">
    <location>
        <position position="38"/>
    </location>
    <ligand>
        <name>GTP</name>
        <dbReference type="ChEBI" id="CHEBI:37565"/>
    </ligand>
</feature>
<feature type="binding site" evidence="1">
    <location>
        <position position="39"/>
    </location>
    <ligand>
        <name>GTP</name>
        <dbReference type="ChEBI" id="CHEBI:37565"/>
    </ligand>
</feature>
<feature type="binding site" evidence="1">
    <location>
        <position position="57"/>
    </location>
    <ligand>
        <name>GTP</name>
        <dbReference type="ChEBI" id="CHEBI:37565"/>
    </ligand>
</feature>
<feature type="binding site" evidence="1">
    <location>
        <position position="115"/>
    </location>
    <ligand>
        <name>GTP</name>
        <dbReference type="ChEBI" id="CHEBI:37565"/>
    </ligand>
</feature>
<feature type="binding site" evidence="1">
    <location>
        <position position="138"/>
    </location>
    <ligand>
        <name>GTP</name>
        <dbReference type="ChEBI" id="CHEBI:37565"/>
    </ligand>
</feature>
<reference key="1">
    <citation type="journal article" date="1997" name="J. Bacteriol.">
        <title>Complete genome sequence of Methanobacterium thermoautotrophicum deltaH: functional analysis and comparative genomics.</title>
        <authorList>
            <person name="Smith D.R."/>
            <person name="Doucette-Stamm L.A."/>
            <person name="Deloughery C."/>
            <person name="Lee H.-M."/>
            <person name="Dubois J."/>
            <person name="Aldredge T."/>
            <person name="Bashirzadeh R."/>
            <person name="Blakely D."/>
            <person name="Cook R."/>
            <person name="Gilbert K."/>
            <person name="Harrison D."/>
            <person name="Hoang L."/>
            <person name="Keagle P."/>
            <person name="Lumm W."/>
            <person name="Pothier B."/>
            <person name="Qiu D."/>
            <person name="Spadafora R."/>
            <person name="Vicare R."/>
            <person name="Wang Y."/>
            <person name="Wierzbowski J."/>
            <person name="Gibson R."/>
            <person name="Jiwani N."/>
            <person name="Caruso A."/>
            <person name="Bush D."/>
            <person name="Safer H."/>
            <person name="Patwell D."/>
            <person name="Prabhakar S."/>
            <person name="McDougall S."/>
            <person name="Shimer G."/>
            <person name="Goyal A."/>
            <person name="Pietrovski S."/>
            <person name="Church G.M."/>
            <person name="Daniels C.J."/>
            <person name="Mao J.-I."/>
            <person name="Rice P."/>
            <person name="Noelling J."/>
            <person name="Reeve J.N."/>
        </authorList>
    </citation>
    <scope>NUCLEOTIDE SEQUENCE [LARGE SCALE GENOMIC DNA]</scope>
    <source>
        <strain>ATCC 29096 / DSM 1053 / JCM 10044 / NBRC 100330 / Delta H</strain>
    </source>
</reference>
<name>DPCKG_METTH</name>